<sequence>MSTMSARDNEKGSARSQPSHAAASEIENVPRPSRQQSWTGTMIKVFIICACAGIVSKYIIPLDSIFKSVHIDPHDYATRANRILSTTPLIDGHNDLPYLIRLETKNKIYDHEKLPFRTGLLSHTDQIKIQEGKLGGQFWSVFVECATDPNAEIDDPTWAVRDTLEQIDVTKRLVQEYPDLLEYCESASCAKAAFKRGKVGSFLGIEGGHQIGNSLASLRQVYDLGVRYITVTHNCDNAFATAASTVAVGKPDLGLTDFGREFVKEMNRLGMLVDLSHVSHQTMRDILSVTKAPVMFSHSSSYALSKHLRNVPDDVLNGVTKNGGVVMVTFVPSFLKVDDPASATIHDAVDHILHVAKVAGWDHVGIGSDFDGTADVPEGLENVSKYPRLIELLLERGVTDEQARKLIGENILRVWSNVEEIAENIRALGEKPNEETWSGRKWTAAIDIPMPFMFKDSADKRKEL</sequence>
<keyword id="KW-0224">Dipeptidase</keyword>
<keyword id="KW-1015">Disulfide bond</keyword>
<keyword id="KW-0325">Glycoprotein</keyword>
<keyword id="KW-0378">Hydrolase</keyword>
<keyword id="KW-0472">Membrane</keyword>
<keyword id="KW-0479">Metal-binding</keyword>
<keyword id="KW-0482">Metalloprotease</keyword>
<keyword id="KW-0645">Protease</keyword>
<keyword id="KW-0812">Transmembrane</keyword>
<keyword id="KW-1133">Transmembrane helix</keyword>
<keyword id="KW-0862">Zinc</keyword>
<gene>
    <name type="ORF">CPC735_014430</name>
</gene>
<organism>
    <name type="scientific">Coccidioides posadasii (strain C735)</name>
    <name type="common">Valley fever fungus</name>
    <dbReference type="NCBI Taxonomy" id="222929"/>
    <lineage>
        <taxon>Eukaryota</taxon>
        <taxon>Fungi</taxon>
        <taxon>Dikarya</taxon>
        <taxon>Ascomycota</taxon>
        <taxon>Pezizomycotina</taxon>
        <taxon>Eurotiomycetes</taxon>
        <taxon>Eurotiomycetidae</taxon>
        <taxon>Onygenales</taxon>
        <taxon>Onygenaceae</taxon>
        <taxon>Coccidioides</taxon>
    </lineage>
</organism>
<proteinExistence type="inferred from homology"/>
<evidence type="ECO:0000250" key="1"/>
<evidence type="ECO:0000255" key="2"/>
<evidence type="ECO:0000255" key="3">
    <source>
        <dbReference type="PROSITE-ProRule" id="PRU10073"/>
    </source>
</evidence>
<evidence type="ECO:0000256" key="4">
    <source>
        <dbReference type="SAM" id="MobiDB-lite"/>
    </source>
</evidence>
<evidence type="ECO:0000305" key="5"/>
<protein>
    <recommendedName>
        <fullName>Putative dipeptidase CPC735_014430</fullName>
        <ecNumber evidence="3">3.4.13.19</ecNumber>
    </recommendedName>
</protein>
<comment type="function">
    <text evidence="1">Hydrolyzes a wide range of dipeptides.</text>
</comment>
<comment type="catalytic activity">
    <reaction evidence="3">
        <text>an L-aminoacyl-L-amino acid + H2O = 2 an L-alpha-amino acid</text>
        <dbReference type="Rhea" id="RHEA:48940"/>
        <dbReference type="ChEBI" id="CHEBI:15377"/>
        <dbReference type="ChEBI" id="CHEBI:59869"/>
        <dbReference type="ChEBI" id="CHEBI:77460"/>
        <dbReference type="EC" id="3.4.13.19"/>
    </reaction>
</comment>
<comment type="cofactor">
    <cofactor evidence="3">
        <name>Zn(2+)</name>
        <dbReference type="ChEBI" id="CHEBI:29105"/>
    </cofactor>
</comment>
<comment type="subcellular location">
    <subcellularLocation>
        <location evidence="5">Membrane</location>
        <topology evidence="5">Single-pass membrane protein</topology>
    </subcellularLocation>
</comment>
<comment type="similarity">
    <text evidence="3">Belongs to the metallo-dependent hydrolases superfamily. Peptidase M19 family.</text>
</comment>
<reference key="1">
    <citation type="journal article" date="2009" name="Genome Res.">
        <title>Comparative genomic analyses of the human fungal pathogens Coccidioides and their relatives.</title>
        <authorList>
            <person name="Sharpton T.J."/>
            <person name="Stajich J.E."/>
            <person name="Rounsley S.D."/>
            <person name="Gardner M.J."/>
            <person name="Wortman J.R."/>
            <person name="Jordar V.S."/>
            <person name="Maiti R."/>
            <person name="Kodira C.D."/>
            <person name="Neafsey D.E."/>
            <person name="Zeng Q."/>
            <person name="Hung C.-Y."/>
            <person name="McMahan C."/>
            <person name="Muszewska A."/>
            <person name="Grynberg M."/>
            <person name="Mandel M.A."/>
            <person name="Kellner E.M."/>
            <person name="Barker B.M."/>
            <person name="Galgiani J.N."/>
            <person name="Orbach M.J."/>
            <person name="Kirkland T.N."/>
            <person name="Cole G.T."/>
            <person name="Henn M.R."/>
            <person name="Birren B.W."/>
            <person name="Taylor J.W."/>
        </authorList>
    </citation>
    <scope>NUCLEOTIDE SEQUENCE [LARGE SCALE GENOMIC DNA]</scope>
    <source>
        <strain>C735</strain>
    </source>
</reference>
<accession>C5PCN6</accession>
<feature type="chain" id="PRO_0000411216" description="Putative dipeptidase CPC735_014430">
    <location>
        <begin position="1"/>
        <end position="464"/>
    </location>
</feature>
<feature type="transmembrane region" description="Helical" evidence="2">
    <location>
        <begin position="40"/>
        <end position="56"/>
    </location>
</feature>
<feature type="region of interest" description="Disordered" evidence="4">
    <location>
        <begin position="1"/>
        <end position="34"/>
    </location>
</feature>
<feature type="binding site" evidence="3">
    <location>
        <position position="93"/>
    </location>
    <ligand>
        <name>Zn(2+)</name>
        <dbReference type="ChEBI" id="CHEBI:29105"/>
        <label>1</label>
        <note>catalytic</note>
    </ligand>
</feature>
<feature type="binding site" evidence="3">
    <location>
        <position position="95"/>
    </location>
    <ligand>
        <name>Zn(2+)</name>
        <dbReference type="ChEBI" id="CHEBI:29105"/>
        <label>1</label>
        <note>catalytic</note>
    </ligand>
</feature>
<feature type="binding site" evidence="3">
    <location>
        <position position="206"/>
    </location>
    <ligand>
        <name>Zn(2+)</name>
        <dbReference type="ChEBI" id="CHEBI:29105"/>
        <label>1</label>
        <note>catalytic</note>
    </ligand>
</feature>
<feature type="binding site" evidence="3">
    <location>
        <position position="206"/>
    </location>
    <ligand>
        <name>Zn(2+)</name>
        <dbReference type="ChEBI" id="CHEBI:29105"/>
        <label>2</label>
        <note>catalytic</note>
    </ligand>
</feature>
<feature type="binding site" evidence="3">
    <location>
        <position position="233"/>
    </location>
    <ligand>
        <name>substrate</name>
    </ligand>
</feature>
<feature type="binding site" evidence="3">
    <location>
        <position position="277"/>
    </location>
    <ligand>
        <name>Zn(2+)</name>
        <dbReference type="ChEBI" id="CHEBI:29105"/>
        <label>2</label>
        <note>catalytic</note>
    </ligand>
</feature>
<feature type="binding site" evidence="3">
    <location>
        <position position="298"/>
    </location>
    <ligand>
        <name>Zn(2+)</name>
        <dbReference type="ChEBI" id="CHEBI:29105"/>
        <label>2</label>
        <note>catalytic</note>
    </ligand>
</feature>
<feature type="binding site" evidence="3">
    <location>
        <position position="309"/>
    </location>
    <ligand>
        <name>substrate</name>
    </ligand>
</feature>
<feature type="binding site" evidence="3">
    <location>
        <position position="369"/>
    </location>
    <ligand>
        <name>substrate</name>
    </ligand>
</feature>
<feature type="glycosylation site" description="N-linked (GlcNAc...) asparagine" evidence="2">
    <location>
        <position position="382"/>
    </location>
</feature>
<feature type="disulfide bond" evidence="3">
    <location>
        <begin position="145"/>
        <end position="235"/>
    </location>
</feature>
<dbReference type="EC" id="3.4.13.19" evidence="3"/>
<dbReference type="EMBL" id="ACFW01000043">
    <property type="protein sequence ID" value="EER24847.1"/>
    <property type="molecule type" value="Genomic_DNA"/>
</dbReference>
<dbReference type="RefSeq" id="XP_003066992.1">
    <property type="nucleotide sequence ID" value="XM_003066946.1"/>
</dbReference>
<dbReference type="SMR" id="C5PCN6"/>
<dbReference type="KEGG" id="cpw:9692463"/>
<dbReference type="VEuPathDB" id="FungiDB:CPC735_014430"/>
<dbReference type="HOGENOM" id="CLU_031404_4_2_1"/>
<dbReference type="OrthoDB" id="445695at2759"/>
<dbReference type="Proteomes" id="UP000009084">
    <property type="component" value="Unassembled WGS sequence"/>
</dbReference>
<dbReference type="GO" id="GO:0016020">
    <property type="term" value="C:membrane"/>
    <property type="evidence" value="ECO:0007669"/>
    <property type="project" value="UniProtKB-SubCell"/>
</dbReference>
<dbReference type="GO" id="GO:0046872">
    <property type="term" value="F:metal ion binding"/>
    <property type="evidence" value="ECO:0007669"/>
    <property type="project" value="UniProtKB-KW"/>
</dbReference>
<dbReference type="GO" id="GO:0070573">
    <property type="term" value="F:metallodipeptidase activity"/>
    <property type="evidence" value="ECO:0007669"/>
    <property type="project" value="InterPro"/>
</dbReference>
<dbReference type="GO" id="GO:0006508">
    <property type="term" value="P:proteolysis"/>
    <property type="evidence" value="ECO:0007669"/>
    <property type="project" value="UniProtKB-KW"/>
</dbReference>
<dbReference type="CDD" id="cd01301">
    <property type="entry name" value="rDP_like"/>
    <property type="match status" value="1"/>
</dbReference>
<dbReference type="Gene3D" id="3.20.20.140">
    <property type="entry name" value="Metal-dependent hydrolases"/>
    <property type="match status" value="1"/>
</dbReference>
<dbReference type="InterPro" id="IPR000180">
    <property type="entry name" value="Dipep_AS"/>
</dbReference>
<dbReference type="InterPro" id="IPR032466">
    <property type="entry name" value="Metal_Hydrolase"/>
</dbReference>
<dbReference type="InterPro" id="IPR008257">
    <property type="entry name" value="Pept_M19"/>
</dbReference>
<dbReference type="PANTHER" id="PTHR10443:SF12">
    <property type="entry name" value="DIPEPTIDASE"/>
    <property type="match status" value="1"/>
</dbReference>
<dbReference type="PANTHER" id="PTHR10443">
    <property type="entry name" value="MICROSOMAL DIPEPTIDASE"/>
    <property type="match status" value="1"/>
</dbReference>
<dbReference type="Pfam" id="PF01244">
    <property type="entry name" value="Peptidase_M19"/>
    <property type="match status" value="1"/>
</dbReference>
<dbReference type="SUPFAM" id="SSF51556">
    <property type="entry name" value="Metallo-dependent hydrolases"/>
    <property type="match status" value="1"/>
</dbReference>
<dbReference type="PROSITE" id="PS00869">
    <property type="entry name" value="RENAL_DIPEPTIDASE_1"/>
    <property type="match status" value="1"/>
</dbReference>
<dbReference type="PROSITE" id="PS51365">
    <property type="entry name" value="RENAL_DIPEPTIDASE_2"/>
    <property type="match status" value="1"/>
</dbReference>
<name>DPEP2_COCP7</name>